<name>HEMH_WOLSU</name>
<keyword id="KW-0963">Cytoplasm</keyword>
<keyword id="KW-0350">Heme biosynthesis</keyword>
<keyword id="KW-0408">Iron</keyword>
<keyword id="KW-0456">Lyase</keyword>
<keyword id="KW-0479">Metal-binding</keyword>
<keyword id="KW-0627">Porphyrin biosynthesis</keyword>
<keyword id="KW-1185">Reference proteome</keyword>
<feature type="chain" id="PRO_0000175228" description="Ferrochelatase">
    <location>
        <begin position="1"/>
        <end position="316"/>
    </location>
</feature>
<feature type="binding site" evidence="1">
    <location>
        <position position="188"/>
    </location>
    <ligand>
        <name>Fe cation</name>
        <dbReference type="ChEBI" id="CHEBI:24875"/>
    </ligand>
</feature>
<feature type="binding site" evidence="1">
    <location>
        <position position="269"/>
    </location>
    <ligand>
        <name>Fe cation</name>
        <dbReference type="ChEBI" id="CHEBI:24875"/>
    </ligand>
</feature>
<comment type="function">
    <text evidence="1">Catalyzes the ferrous insertion into protoporphyrin IX.</text>
</comment>
<comment type="catalytic activity">
    <reaction evidence="1">
        <text>heme b + 2 H(+) = protoporphyrin IX + Fe(2+)</text>
        <dbReference type="Rhea" id="RHEA:22584"/>
        <dbReference type="ChEBI" id="CHEBI:15378"/>
        <dbReference type="ChEBI" id="CHEBI:29033"/>
        <dbReference type="ChEBI" id="CHEBI:57306"/>
        <dbReference type="ChEBI" id="CHEBI:60344"/>
        <dbReference type="EC" id="4.98.1.1"/>
    </reaction>
</comment>
<comment type="pathway">
    <text evidence="1">Porphyrin-containing compound metabolism; protoheme biosynthesis; protoheme from protoporphyrin-IX: step 1/1.</text>
</comment>
<comment type="subcellular location">
    <subcellularLocation>
        <location evidence="1">Cytoplasm</location>
    </subcellularLocation>
</comment>
<comment type="similarity">
    <text evidence="1">Belongs to the ferrochelatase family.</text>
</comment>
<protein>
    <recommendedName>
        <fullName evidence="1">Ferrochelatase</fullName>
        <ecNumber evidence="1">4.98.1.1</ecNumber>
    </recommendedName>
    <alternativeName>
        <fullName evidence="1">Heme synthase</fullName>
    </alternativeName>
    <alternativeName>
        <fullName evidence="1">Protoheme ferro-lyase</fullName>
    </alternativeName>
</protein>
<organism>
    <name type="scientific">Wolinella succinogenes (strain ATCC 29543 / DSM 1740 / CCUG 13145 / JCM 31913 / LMG 7466 / NCTC 11488 / FDC 602W)</name>
    <name type="common">Vibrio succinogenes</name>
    <dbReference type="NCBI Taxonomy" id="273121"/>
    <lineage>
        <taxon>Bacteria</taxon>
        <taxon>Pseudomonadati</taxon>
        <taxon>Campylobacterota</taxon>
        <taxon>Epsilonproteobacteria</taxon>
        <taxon>Campylobacterales</taxon>
        <taxon>Helicobacteraceae</taxon>
        <taxon>Wolinella</taxon>
    </lineage>
</organism>
<accession>Q7M7P9</accession>
<evidence type="ECO:0000255" key="1">
    <source>
        <dbReference type="HAMAP-Rule" id="MF_00323"/>
    </source>
</evidence>
<reference key="1">
    <citation type="journal article" date="2003" name="Proc. Natl. Acad. Sci. U.S.A.">
        <title>Complete genome sequence and analysis of Wolinella succinogenes.</title>
        <authorList>
            <person name="Baar C."/>
            <person name="Eppinger M."/>
            <person name="Raddatz G."/>
            <person name="Simon J."/>
            <person name="Lanz C."/>
            <person name="Klimmek O."/>
            <person name="Nandakumar R."/>
            <person name="Gross R."/>
            <person name="Rosinus A."/>
            <person name="Keller H."/>
            <person name="Jagtap P."/>
            <person name="Linke B."/>
            <person name="Meyer F."/>
            <person name="Lederer H."/>
            <person name="Schuster S.C."/>
        </authorList>
    </citation>
    <scope>NUCLEOTIDE SEQUENCE [LARGE SCALE GENOMIC DNA]</scope>
    <source>
        <strain>ATCC 29543 / DSM 1740 / CCUG 13145 / JCM 31913 / LMG 7466 / NCTC 11488 / FDC 602W</strain>
    </source>
</reference>
<proteinExistence type="inferred from homology"/>
<gene>
    <name evidence="1" type="primary">hemH</name>
    <name type="ordered locus">WS2157</name>
</gene>
<sequence>MKKAVILLNMGGPSSLLEVDMFLKNMFNDPRILPIKSPFFRSLVASFIANRRSETAKANYRKIGGKSPLIGHTFNLIQKLQSLDPSRFYTYAMRYTPPMTDMAVRELAQKEIEEVTLFSLYPQYSTTTTLSSIEEFHKQCALLSYFPKTKEIDRYFEDSNYNEAIIDRILEALGGDNPEEFTLIFSAHGLPQSVIDAGDPYEKEVHANIQALTKLLEERGITFKKITHAYQSKVGPMKWLEPSLDEVLKLHAKEKILLYPIAFTLDNSETDFELRIEYQEKATHLGITDYRVASCLNDSTRFAHAIIKLISQGEIS</sequence>
<dbReference type="EC" id="4.98.1.1" evidence="1"/>
<dbReference type="EMBL" id="BX571662">
    <property type="protein sequence ID" value="CAE11151.1"/>
    <property type="molecule type" value="Genomic_DNA"/>
</dbReference>
<dbReference type="RefSeq" id="WP_011139933.1">
    <property type="nucleotide sequence ID" value="NC_005090.1"/>
</dbReference>
<dbReference type="SMR" id="Q7M7P9"/>
<dbReference type="STRING" id="273121.WS2157"/>
<dbReference type="KEGG" id="wsu:WS2157"/>
<dbReference type="eggNOG" id="COG0276">
    <property type="taxonomic scope" value="Bacteria"/>
</dbReference>
<dbReference type="HOGENOM" id="CLU_018884_4_1_7"/>
<dbReference type="UniPathway" id="UPA00252">
    <property type="reaction ID" value="UER00325"/>
</dbReference>
<dbReference type="Proteomes" id="UP000000422">
    <property type="component" value="Chromosome"/>
</dbReference>
<dbReference type="GO" id="GO:0005737">
    <property type="term" value="C:cytoplasm"/>
    <property type="evidence" value="ECO:0007669"/>
    <property type="project" value="UniProtKB-SubCell"/>
</dbReference>
<dbReference type="GO" id="GO:0004325">
    <property type="term" value="F:ferrochelatase activity"/>
    <property type="evidence" value="ECO:0007669"/>
    <property type="project" value="UniProtKB-UniRule"/>
</dbReference>
<dbReference type="GO" id="GO:0046872">
    <property type="term" value="F:metal ion binding"/>
    <property type="evidence" value="ECO:0007669"/>
    <property type="project" value="UniProtKB-KW"/>
</dbReference>
<dbReference type="GO" id="GO:0006783">
    <property type="term" value="P:heme biosynthetic process"/>
    <property type="evidence" value="ECO:0007669"/>
    <property type="project" value="UniProtKB-UniRule"/>
</dbReference>
<dbReference type="CDD" id="cd00419">
    <property type="entry name" value="Ferrochelatase_C"/>
    <property type="match status" value="1"/>
</dbReference>
<dbReference type="CDD" id="cd03411">
    <property type="entry name" value="Ferrochelatase_N"/>
    <property type="match status" value="1"/>
</dbReference>
<dbReference type="Gene3D" id="3.40.50.1400">
    <property type="match status" value="2"/>
</dbReference>
<dbReference type="HAMAP" id="MF_00323">
    <property type="entry name" value="Ferrochelatase"/>
    <property type="match status" value="1"/>
</dbReference>
<dbReference type="InterPro" id="IPR001015">
    <property type="entry name" value="Ferrochelatase"/>
</dbReference>
<dbReference type="InterPro" id="IPR019772">
    <property type="entry name" value="Ferrochelatase_AS"/>
</dbReference>
<dbReference type="InterPro" id="IPR033644">
    <property type="entry name" value="Ferrochelatase_C"/>
</dbReference>
<dbReference type="InterPro" id="IPR033659">
    <property type="entry name" value="Ferrochelatase_N"/>
</dbReference>
<dbReference type="NCBIfam" id="TIGR00109">
    <property type="entry name" value="hemH"/>
    <property type="match status" value="1"/>
</dbReference>
<dbReference type="PANTHER" id="PTHR11108">
    <property type="entry name" value="FERROCHELATASE"/>
    <property type="match status" value="1"/>
</dbReference>
<dbReference type="PANTHER" id="PTHR11108:SF1">
    <property type="entry name" value="FERROCHELATASE, MITOCHONDRIAL"/>
    <property type="match status" value="1"/>
</dbReference>
<dbReference type="Pfam" id="PF00762">
    <property type="entry name" value="Ferrochelatase"/>
    <property type="match status" value="1"/>
</dbReference>
<dbReference type="SUPFAM" id="SSF53800">
    <property type="entry name" value="Chelatase"/>
    <property type="match status" value="1"/>
</dbReference>
<dbReference type="PROSITE" id="PS00534">
    <property type="entry name" value="FERROCHELATASE"/>
    <property type="match status" value="1"/>
</dbReference>